<organismHost>
    <name type="scientific">Homo sapiens</name>
    <name type="common">Human</name>
    <dbReference type="NCBI Taxonomy" id="9606"/>
</organismHost>
<dbReference type="EMBL" id="M73260">
    <property type="status" value="NOT_ANNOTATED_CDS"/>
    <property type="molecule type" value="Genomic_DNA"/>
</dbReference>
<dbReference type="EMBL" id="X03002">
    <property type="protein sequence ID" value="CAA26783.1"/>
    <property type="molecule type" value="Genomic_DNA"/>
</dbReference>
<dbReference type="EMBL" id="M12406">
    <property type="protein sequence ID" value="AAA42492.1"/>
    <property type="molecule type" value="Genomic_DNA"/>
</dbReference>
<dbReference type="PIR" id="A03822">
    <property type="entry name" value="ERADA5"/>
</dbReference>
<dbReference type="RefSeq" id="AP_000220.1">
    <property type="nucleotide sequence ID" value="AC_000008.1"/>
</dbReference>
<dbReference type="SMR" id="P04494"/>
<dbReference type="IntAct" id="P04494">
    <property type="interactions" value="4"/>
</dbReference>
<dbReference type="MINT" id="P04494"/>
<dbReference type="Proteomes" id="UP000004992">
    <property type="component" value="Genome"/>
</dbReference>
<dbReference type="GO" id="GO:0044167">
    <property type="term" value="C:host cell endoplasmic reticulum membrane"/>
    <property type="evidence" value="ECO:0007669"/>
    <property type="project" value="UniProtKB-SubCell"/>
</dbReference>
<dbReference type="GO" id="GO:0016020">
    <property type="term" value="C:membrane"/>
    <property type="evidence" value="ECO:0007669"/>
    <property type="project" value="UniProtKB-KW"/>
</dbReference>
<dbReference type="GO" id="GO:0005537">
    <property type="term" value="F:D-mannose binding"/>
    <property type="evidence" value="ECO:0007669"/>
    <property type="project" value="UniProtKB-KW"/>
</dbReference>
<dbReference type="GO" id="GO:0046776">
    <property type="term" value="P:symbiont-mediated suppression of host antigen processing and presentation of peptide antigen via MHC class I"/>
    <property type="evidence" value="ECO:0000314"/>
    <property type="project" value="GO_Central"/>
</dbReference>
<dbReference type="Gene3D" id="2.60.40.3530">
    <property type="match status" value="1"/>
</dbReference>
<dbReference type="InterPro" id="IPR006965">
    <property type="entry name" value="Adenovirus_Gp19K"/>
</dbReference>
<dbReference type="InterPro" id="IPR038710">
    <property type="entry name" value="Adenovirus_Gp19K_sf"/>
</dbReference>
<dbReference type="Pfam" id="PF04881">
    <property type="entry name" value="Adeno_GP19K"/>
    <property type="match status" value="1"/>
</dbReference>
<comment type="function">
    <text evidence="3">Binds and retains class I heavy chains in the endoplasmic reticulum during the early period of virus infection, thereby impairing their transport to the cell surface. Also delays the expression of class I alleles that it cannot affect by direct retention. Binds transporters associated with antigen processing (TAP) and acts as a tapasin inhibitor, preventing class I/TAP association. In consequence, infected cells are masked for immune recognition by cytotoxic T-lymphocytes.</text>
</comment>
<comment type="subcellular location">
    <subcellularLocation>
        <location>Host endoplasmic reticulum membrane</location>
        <topology>Single-pass type I membrane protein</topology>
    </subcellularLocation>
</comment>
<comment type="developmental stage">
    <text>Expressed at early period of virus infection.</text>
</comment>
<comment type="domain">
    <text>The lumenal domain binds directly to the peptide-binding domain of class I molecules.</text>
</comment>
<comment type="domain">
    <text evidence="1">The di-lysine motif confers endoplasmic reticulum localization for type I membrane proteins.</text>
</comment>
<comment type="PTM">
    <text evidence="1">Both disulfide bonds are absolutely critical for the interaction with MHC antigens.</text>
</comment>
<comment type="PTM">
    <text evidence="1">N-glycosylated; high-mannose.</text>
</comment>
<comment type="similarity">
    <text evidence="5">Belongs to the adenoviridae E19 family.</text>
</comment>
<feature type="signal peptide" evidence="4">
    <location>
        <begin position="1"/>
        <end position="17"/>
    </location>
</feature>
<feature type="chain" id="PRO_0000036484" description="Early E3 18.5 kDa glycoprotein">
    <location>
        <begin position="18"/>
        <end position="160"/>
    </location>
</feature>
<feature type="topological domain" description="Lumenal" evidence="2">
    <location>
        <begin position="18"/>
        <end position="124"/>
    </location>
</feature>
<feature type="transmembrane region" description="Helical" evidence="2">
    <location>
        <begin position="125"/>
        <end position="145"/>
    </location>
</feature>
<feature type="topological domain" description="Cytoplasmic" evidence="2">
    <location>
        <begin position="146"/>
        <end position="160"/>
    </location>
</feature>
<feature type="short sequence motif" description="Di-lysine motif" evidence="5">
    <location>
        <begin position="157"/>
        <end position="160"/>
    </location>
</feature>
<feature type="glycosylation site" description="N-linked (GlcNAc...) asparagine; by host" evidence="2">
    <location>
        <position position="30"/>
    </location>
</feature>
<feature type="glycosylation site" description="N-linked (GlcNAc...) asparagine; by host" evidence="2">
    <location>
        <position position="79"/>
    </location>
</feature>
<feature type="disulfide bond" evidence="1">
    <location>
        <begin position="29"/>
        <end position="46"/>
    </location>
</feature>
<feature type="disulfide bond" evidence="1">
    <location>
        <begin position="40"/>
        <end position="101"/>
    </location>
</feature>
<sequence length="160" mass="18502">MIRYIILGLLTLASAHGTTQKVDFKEPACNVTFAAEANECTTLIKCTTEHEKLLIRHKNKIGKYAVYAIWQPGDTTEYNVTVFQGKSHKTFMYTFPFYEMCDITMYMSKQYKLWPPQNCVENTGTFCCTAMLITVLALVCTLLYIKYKSRRSFIEEKKMP</sequence>
<reference key="1">
    <citation type="journal article" date="1985" name="Virology">
        <title>DNA sequence of the early E3 transcription unit of adenovirus 5.</title>
        <authorList>
            <person name="Cladaras C."/>
            <person name="Wold W.S.M."/>
        </authorList>
    </citation>
    <scope>NUCLEOTIDE SEQUENCE [GENOMIC DNA]</scope>
</reference>
<reference key="2">
    <citation type="journal article" date="1985" name="J. Biol. Chem.">
        <title>The 19-kDa glycoprotein coded by region E3 of adenovirus. Purification, characterization, and structural analysis.</title>
        <authorList>
            <person name="Wold W.S.M."/>
            <person name="Cladaras C."/>
            <person name="Deutscher S.L."/>
            <person name="Kapoor Q.S."/>
        </authorList>
    </citation>
    <scope>NUCLEOTIDE SEQUENCE [GENOMIC DNA]</scope>
    <scope>PROTEIN SEQUENCE OF N-TERMINUS</scope>
</reference>
<reference key="3">
    <citation type="journal article" date="1992" name="Virology">
        <title>The sequence of the genome of adenovirus type 5 and its comparison with the genome of adenovirus type 2.</title>
        <authorList>
            <person name="Chroboczek J."/>
            <person name="Bieber F."/>
            <person name="Jacrot B."/>
        </authorList>
    </citation>
    <scope>NUCLEOTIDE SEQUENCE [LARGE SCALE GENOMIC DNA]</scope>
</reference>
<reference key="4">
    <citation type="journal article" date="1999" name="J. Immunol.">
        <title>Adenovirus E19 has two mechanisms for affecting class I MHC expression.</title>
        <authorList>
            <person name="Bennett E.M."/>
            <person name="Bennink J.R."/>
            <person name="Yewdell J.W."/>
            <person name="Brodsky F.M."/>
        </authorList>
    </citation>
    <scope>FUNCTION</scope>
</reference>
<name>E3GL_ADE05</name>
<proteinExistence type="evidence at protein level"/>
<protein>
    <recommendedName>
        <fullName>Early E3 18.5 kDa glycoprotein</fullName>
    </recommendedName>
    <alternativeName>
        <fullName>E3-19K</fullName>
    </alternativeName>
    <alternativeName>
        <fullName>E3gp 19 kDa</fullName>
        <shortName>E19</shortName>
    </alternativeName>
    <alternativeName>
        <fullName>GP19K</fullName>
    </alternativeName>
</protein>
<organism>
    <name type="scientific">Human adenovirus C serotype 5</name>
    <name type="common">HAdV-5</name>
    <name type="synonym">Human adenovirus 5</name>
    <dbReference type="NCBI Taxonomy" id="28285"/>
    <lineage>
        <taxon>Viruses</taxon>
        <taxon>Varidnaviria</taxon>
        <taxon>Bamfordvirae</taxon>
        <taxon>Preplasmiviricota</taxon>
        <taxon>Tectiliviricetes</taxon>
        <taxon>Rowavirales</taxon>
        <taxon>Adenoviridae</taxon>
        <taxon>Mastadenovirus</taxon>
        <taxon>Human mastadenovirus C</taxon>
    </lineage>
</organism>
<keyword id="KW-0903">Direct protein sequencing</keyword>
<keyword id="KW-1015">Disulfide bond</keyword>
<keyword id="KW-0244">Early protein</keyword>
<keyword id="KW-0325">Glycoprotein</keyword>
<keyword id="KW-1038">Host endoplasmic reticulum</keyword>
<keyword id="KW-1043">Host membrane</keyword>
<keyword id="KW-0945">Host-virus interaction</keyword>
<keyword id="KW-1080">Inhibition of host adaptive immune response by virus</keyword>
<keyword id="KW-1108">Inhibition of host tapasin by virus</keyword>
<keyword id="KW-0430">Lectin</keyword>
<keyword id="KW-0465">Mannose-binding</keyword>
<keyword id="KW-0472">Membrane</keyword>
<keyword id="KW-1185">Reference proteome</keyword>
<keyword id="KW-0732">Signal</keyword>
<keyword id="KW-0812">Transmembrane</keyword>
<keyword id="KW-1133">Transmembrane helix</keyword>
<keyword id="KW-0899">Viral immunoevasion</keyword>
<accession>P04494</accession>
<evidence type="ECO:0000250" key="1"/>
<evidence type="ECO:0000255" key="2"/>
<evidence type="ECO:0000269" key="3">
    <source>
    </source>
</evidence>
<evidence type="ECO:0000269" key="4">
    <source>
    </source>
</evidence>
<evidence type="ECO:0000305" key="5"/>